<name>RNPA_PSEPG</name>
<evidence type="ECO:0000255" key="1">
    <source>
        <dbReference type="HAMAP-Rule" id="MF_00227"/>
    </source>
</evidence>
<organism>
    <name type="scientific">Pseudomonas putida (strain GB-1)</name>
    <dbReference type="NCBI Taxonomy" id="76869"/>
    <lineage>
        <taxon>Bacteria</taxon>
        <taxon>Pseudomonadati</taxon>
        <taxon>Pseudomonadota</taxon>
        <taxon>Gammaproteobacteria</taxon>
        <taxon>Pseudomonadales</taxon>
        <taxon>Pseudomonadaceae</taxon>
        <taxon>Pseudomonas</taxon>
    </lineage>
</organism>
<proteinExistence type="inferred from homology"/>
<comment type="function">
    <text evidence="1">RNaseP catalyzes the removal of the 5'-leader sequence from pre-tRNA to produce the mature 5'-terminus. It can also cleave other RNA substrates such as 4.5S RNA. The protein component plays an auxiliary but essential role in vivo by binding to the 5'-leader sequence and broadening the substrate specificity of the ribozyme.</text>
</comment>
<comment type="catalytic activity">
    <reaction evidence="1">
        <text>Endonucleolytic cleavage of RNA, removing 5'-extranucleotides from tRNA precursor.</text>
        <dbReference type="EC" id="3.1.26.5"/>
    </reaction>
</comment>
<comment type="subunit">
    <text evidence="1">Consists of a catalytic RNA component (M1 or rnpB) and a protein subunit.</text>
</comment>
<comment type="similarity">
    <text evidence="1">Belongs to the RnpA family.</text>
</comment>
<feature type="chain" id="PRO_1000194668" description="Ribonuclease P protein component">
    <location>
        <begin position="1"/>
        <end position="134"/>
    </location>
</feature>
<dbReference type="EC" id="3.1.26.5" evidence="1"/>
<dbReference type="EMBL" id="CP000926">
    <property type="protein sequence ID" value="ABY95917.1"/>
    <property type="molecule type" value="Genomic_DNA"/>
</dbReference>
<dbReference type="RefSeq" id="WP_012269840.1">
    <property type="nucleotide sequence ID" value="NC_010322.1"/>
</dbReference>
<dbReference type="SMR" id="B0KEU7"/>
<dbReference type="KEGG" id="ppg:PputGB1_0001"/>
<dbReference type="eggNOG" id="COG0594">
    <property type="taxonomic scope" value="Bacteria"/>
</dbReference>
<dbReference type="HOGENOM" id="CLU_117179_11_0_6"/>
<dbReference type="Proteomes" id="UP000002157">
    <property type="component" value="Chromosome"/>
</dbReference>
<dbReference type="GO" id="GO:0030677">
    <property type="term" value="C:ribonuclease P complex"/>
    <property type="evidence" value="ECO:0007669"/>
    <property type="project" value="TreeGrafter"/>
</dbReference>
<dbReference type="GO" id="GO:0042781">
    <property type="term" value="F:3'-tRNA processing endoribonuclease activity"/>
    <property type="evidence" value="ECO:0007669"/>
    <property type="project" value="TreeGrafter"/>
</dbReference>
<dbReference type="GO" id="GO:0004526">
    <property type="term" value="F:ribonuclease P activity"/>
    <property type="evidence" value="ECO:0007669"/>
    <property type="project" value="UniProtKB-UniRule"/>
</dbReference>
<dbReference type="GO" id="GO:0000049">
    <property type="term" value="F:tRNA binding"/>
    <property type="evidence" value="ECO:0007669"/>
    <property type="project" value="UniProtKB-UniRule"/>
</dbReference>
<dbReference type="GO" id="GO:0001682">
    <property type="term" value="P:tRNA 5'-leader removal"/>
    <property type="evidence" value="ECO:0007669"/>
    <property type="project" value="UniProtKB-UniRule"/>
</dbReference>
<dbReference type="Gene3D" id="3.30.230.10">
    <property type="match status" value="1"/>
</dbReference>
<dbReference type="HAMAP" id="MF_00227">
    <property type="entry name" value="RNase_P"/>
    <property type="match status" value="1"/>
</dbReference>
<dbReference type="InterPro" id="IPR020568">
    <property type="entry name" value="Ribosomal_Su5_D2-typ_SF"/>
</dbReference>
<dbReference type="InterPro" id="IPR014721">
    <property type="entry name" value="Ribsml_uS5_D2-typ_fold_subgr"/>
</dbReference>
<dbReference type="InterPro" id="IPR000100">
    <property type="entry name" value="RNase_P"/>
</dbReference>
<dbReference type="InterPro" id="IPR020539">
    <property type="entry name" value="RNase_P_CS"/>
</dbReference>
<dbReference type="NCBIfam" id="TIGR00188">
    <property type="entry name" value="rnpA"/>
    <property type="match status" value="1"/>
</dbReference>
<dbReference type="PANTHER" id="PTHR33992">
    <property type="entry name" value="RIBONUCLEASE P PROTEIN COMPONENT"/>
    <property type="match status" value="1"/>
</dbReference>
<dbReference type="PANTHER" id="PTHR33992:SF1">
    <property type="entry name" value="RIBONUCLEASE P PROTEIN COMPONENT"/>
    <property type="match status" value="1"/>
</dbReference>
<dbReference type="Pfam" id="PF00825">
    <property type="entry name" value="Ribonuclease_P"/>
    <property type="match status" value="1"/>
</dbReference>
<dbReference type="SUPFAM" id="SSF54211">
    <property type="entry name" value="Ribosomal protein S5 domain 2-like"/>
    <property type="match status" value="1"/>
</dbReference>
<dbReference type="PROSITE" id="PS00648">
    <property type="entry name" value="RIBONUCLEASE_P"/>
    <property type="match status" value="1"/>
</dbReference>
<accession>B0KEU7</accession>
<gene>
    <name evidence="1" type="primary">rnpA</name>
    <name type="ordered locus">PputGB1_0001</name>
</gene>
<sequence>MVSQDFSREKRLLTPRHFKAVFDSPTGKVPGKNLLILARENGLDHPRLGLVIGKKSVKLAVQRNRLKRLMRDSFRLNQQSLAGLDIVIVARKGLGEIENPELHQHFGKLWKRLARSRPTPAATANSAGVDSQDA</sequence>
<keyword id="KW-0255">Endonuclease</keyword>
<keyword id="KW-0378">Hydrolase</keyword>
<keyword id="KW-0540">Nuclease</keyword>
<keyword id="KW-0694">RNA-binding</keyword>
<keyword id="KW-0819">tRNA processing</keyword>
<reference key="1">
    <citation type="submission" date="2008-01" db="EMBL/GenBank/DDBJ databases">
        <title>Complete sequence of Pseudomonas putida GB-1.</title>
        <authorList>
            <consortium name="US DOE Joint Genome Institute"/>
            <person name="Copeland A."/>
            <person name="Lucas S."/>
            <person name="Lapidus A."/>
            <person name="Barry K."/>
            <person name="Glavina del Rio T."/>
            <person name="Dalin E."/>
            <person name="Tice H."/>
            <person name="Pitluck S."/>
            <person name="Bruce D."/>
            <person name="Goodwin L."/>
            <person name="Chertkov O."/>
            <person name="Brettin T."/>
            <person name="Detter J.C."/>
            <person name="Han C."/>
            <person name="Kuske C.R."/>
            <person name="Schmutz J."/>
            <person name="Larimer F."/>
            <person name="Land M."/>
            <person name="Hauser L."/>
            <person name="Kyrpides N."/>
            <person name="Kim E."/>
            <person name="McCarthy J.K."/>
            <person name="Richardson P."/>
        </authorList>
    </citation>
    <scope>NUCLEOTIDE SEQUENCE [LARGE SCALE GENOMIC DNA]</scope>
    <source>
        <strain>GB-1</strain>
    </source>
</reference>
<protein>
    <recommendedName>
        <fullName evidence="1">Ribonuclease P protein component</fullName>
        <shortName evidence="1">RNase P protein</shortName>
        <shortName evidence="1">RNaseP protein</shortName>
        <ecNumber evidence="1">3.1.26.5</ecNumber>
    </recommendedName>
    <alternativeName>
        <fullName evidence="1">Protein C5</fullName>
    </alternativeName>
</protein>